<name>ACT_ASPOR</name>
<dbReference type="EC" id="3.6.4.-" evidence="1"/>
<dbReference type="EMBL" id="BA000053">
    <property type="protein sequence ID" value="BAE62562.1"/>
    <property type="molecule type" value="Genomic_DNA"/>
</dbReference>
<dbReference type="RefSeq" id="XP_001823695.1">
    <property type="nucleotide sequence ID" value="XM_001823643.2"/>
</dbReference>
<dbReference type="SMR" id="Q2U7A3"/>
<dbReference type="STRING" id="510516.Q2U7A3"/>
<dbReference type="EnsemblFungi" id="BAE62562">
    <property type="protein sequence ID" value="BAE62562"/>
    <property type="gene ID" value="AO090124000010"/>
</dbReference>
<dbReference type="GeneID" id="5995766"/>
<dbReference type="KEGG" id="aor:AO090124000010"/>
<dbReference type="VEuPathDB" id="FungiDB:AO090124000010"/>
<dbReference type="HOGENOM" id="CLU_027965_0_2_1"/>
<dbReference type="OMA" id="PNIMVGM"/>
<dbReference type="OrthoDB" id="5309at5052"/>
<dbReference type="Proteomes" id="UP000006564">
    <property type="component" value="Chromosome 5"/>
</dbReference>
<dbReference type="GO" id="GO:0005737">
    <property type="term" value="C:cytoplasm"/>
    <property type="evidence" value="ECO:0007669"/>
    <property type="project" value="UniProtKB-KW"/>
</dbReference>
<dbReference type="GO" id="GO:0005856">
    <property type="term" value="C:cytoskeleton"/>
    <property type="evidence" value="ECO:0007669"/>
    <property type="project" value="UniProtKB-SubCell"/>
</dbReference>
<dbReference type="GO" id="GO:0005524">
    <property type="term" value="F:ATP binding"/>
    <property type="evidence" value="ECO:0007669"/>
    <property type="project" value="UniProtKB-KW"/>
</dbReference>
<dbReference type="GO" id="GO:0016787">
    <property type="term" value="F:hydrolase activity"/>
    <property type="evidence" value="ECO:0007669"/>
    <property type="project" value="UniProtKB-KW"/>
</dbReference>
<dbReference type="CDD" id="cd10224">
    <property type="entry name" value="ASKHA_NBD_actin"/>
    <property type="match status" value="1"/>
</dbReference>
<dbReference type="FunFam" id="3.30.420.40:FF:000050">
    <property type="entry name" value="Actin, alpha skeletal muscle"/>
    <property type="match status" value="1"/>
</dbReference>
<dbReference type="FunFam" id="3.30.420.40:FF:000205">
    <property type="entry name" value="Actin, alpha skeletal muscle"/>
    <property type="match status" value="1"/>
</dbReference>
<dbReference type="FunFam" id="3.30.420.40:FF:000291">
    <property type="entry name" value="Actin, alpha skeletal muscle"/>
    <property type="match status" value="1"/>
</dbReference>
<dbReference type="FunFam" id="3.90.640.10:FF:000001">
    <property type="entry name" value="Actin, muscle"/>
    <property type="match status" value="1"/>
</dbReference>
<dbReference type="Gene3D" id="3.30.420.40">
    <property type="match status" value="2"/>
</dbReference>
<dbReference type="Gene3D" id="3.90.640.10">
    <property type="entry name" value="Actin, Chain A, domain 4"/>
    <property type="match status" value="1"/>
</dbReference>
<dbReference type="InterPro" id="IPR004000">
    <property type="entry name" value="Actin"/>
</dbReference>
<dbReference type="InterPro" id="IPR020902">
    <property type="entry name" value="Actin/actin-like_CS"/>
</dbReference>
<dbReference type="InterPro" id="IPR004001">
    <property type="entry name" value="Actin_CS"/>
</dbReference>
<dbReference type="InterPro" id="IPR043129">
    <property type="entry name" value="ATPase_NBD"/>
</dbReference>
<dbReference type="PANTHER" id="PTHR11937">
    <property type="entry name" value="ACTIN"/>
    <property type="match status" value="1"/>
</dbReference>
<dbReference type="Pfam" id="PF00022">
    <property type="entry name" value="Actin"/>
    <property type="match status" value="1"/>
</dbReference>
<dbReference type="PRINTS" id="PR00190">
    <property type="entry name" value="ACTIN"/>
</dbReference>
<dbReference type="SMART" id="SM00268">
    <property type="entry name" value="ACTIN"/>
    <property type="match status" value="1"/>
</dbReference>
<dbReference type="SUPFAM" id="SSF53067">
    <property type="entry name" value="Actin-like ATPase domain"/>
    <property type="match status" value="2"/>
</dbReference>
<dbReference type="PROSITE" id="PS00406">
    <property type="entry name" value="ACTINS_1"/>
    <property type="match status" value="1"/>
</dbReference>
<dbReference type="PROSITE" id="PS00432">
    <property type="entry name" value="ACTINS_2"/>
    <property type="match status" value="1"/>
</dbReference>
<dbReference type="PROSITE" id="PS01132">
    <property type="entry name" value="ACTINS_ACT_LIKE"/>
    <property type="match status" value="1"/>
</dbReference>
<comment type="function">
    <text>Actins are highly conserved proteins that are involved in various types of cell motility and are ubiquitously expressed in all eukaryotic cells.</text>
</comment>
<comment type="catalytic activity">
    <reaction evidence="1">
        <text>ATP + H2O = ADP + phosphate + H(+)</text>
        <dbReference type="Rhea" id="RHEA:13065"/>
        <dbReference type="ChEBI" id="CHEBI:15377"/>
        <dbReference type="ChEBI" id="CHEBI:15378"/>
        <dbReference type="ChEBI" id="CHEBI:30616"/>
        <dbReference type="ChEBI" id="CHEBI:43474"/>
        <dbReference type="ChEBI" id="CHEBI:456216"/>
    </reaction>
</comment>
<comment type="subcellular location">
    <subcellularLocation>
        <location>Cytoplasm</location>
        <location>Cytoskeleton</location>
    </subcellularLocation>
</comment>
<comment type="similarity">
    <text evidence="2">Belongs to the actin family.</text>
</comment>
<sequence>MDDETAAIVIDNGSGMCKAGFAGDDAPRAVFPSLIGRPRHHGIIVGMGQKDSYVGDEAQSKRGVLSLHYPIEHGIVNNWDDMEKIWHHTYFNELRVASEEHPVLLTEAPINPKSNREKMTQIMFETFNVPAFYVSIQAVLSLYASGRTTGIVLDSGDGVTHVVPIYEGFSMPHAIARMDLAGRDLTEYLVRILAERGHSFTTSAEHEIVRDIKERLCYVALDFEQELETAAKSSSIEKSYELPDGQVIAIGNERFRAPEALFQPSLLGIEQGGIHETTFNSIQKCDVDVRKDLYGNIVMSGGTTLYPGIADRLHKELVNLSPSSMKIKTIAPPERKYSVWIGGSILASLSTFQQMWISKQEYDESGPSIVHRKCF</sequence>
<reference key="1">
    <citation type="journal article" date="2005" name="Nature">
        <title>Genome sequencing and analysis of Aspergillus oryzae.</title>
        <authorList>
            <person name="Machida M."/>
            <person name="Asai K."/>
            <person name="Sano M."/>
            <person name="Tanaka T."/>
            <person name="Kumagai T."/>
            <person name="Terai G."/>
            <person name="Kusumoto K."/>
            <person name="Arima T."/>
            <person name="Akita O."/>
            <person name="Kashiwagi Y."/>
            <person name="Abe K."/>
            <person name="Gomi K."/>
            <person name="Horiuchi H."/>
            <person name="Kitamoto K."/>
            <person name="Kobayashi T."/>
            <person name="Takeuchi M."/>
            <person name="Denning D.W."/>
            <person name="Galagan J.E."/>
            <person name="Nierman W.C."/>
            <person name="Yu J."/>
            <person name="Archer D.B."/>
            <person name="Bennett J.W."/>
            <person name="Bhatnagar D."/>
            <person name="Cleveland T.E."/>
            <person name="Fedorova N.D."/>
            <person name="Gotoh O."/>
            <person name="Horikawa H."/>
            <person name="Hosoyama A."/>
            <person name="Ichinomiya M."/>
            <person name="Igarashi R."/>
            <person name="Iwashita K."/>
            <person name="Juvvadi P.R."/>
            <person name="Kato M."/>
            <person name="Kato Y."/>
            <person name="Kin T."/>
            <person name="Kokubun A."/>
            <person name="Maeda H."/>
            <person name="Maeyama N."/>
            <person name="Maruyama J."/>
            <person name="Nagasaki H."/>
            <person name="Nakajima T."/>
            <person name="Oda K."/>
            <person name="Okada K."/>
            <person name="Paulsen I."/>
            <person name="Sakamoto K."/>
            <person name="Sawano T."/>
            <person name="Takahashi M."/>
            <person name="Takase K."/>
            <person name="Terabayashi Y."/>
            <person name="Wortman J.R."/>
            <person name="Yamada O."/>
            <person name="Yamagata Y."/>
            <person name="Anazawa H."/>
            <person name="Hata Y."/>
            <person name="Koide Y."/>
            <person name="Komori T."/>
            <person name="Koyama Y."/>
            <person name="Minetoki T."/>
            <person name="Suharnan S."/>
            <person name="Tanaka A."/>
            <person name="Isono K."/>
            <person name="Kuhara S."/>
            <person name="Ogasawara N."/>
            <person name="Kikuchi H."/>
        </authorList>
    </citation>
    <scope>NUCLEOTIDE SEQUENCE [LARGE SCALE GENOMIC DNA]</scope>
    <source>
        <strain>ATCC 42149 / RIB 40</strain>
    </source>
</reference>
<feature type="chain" id="PRO_0000248400" description="Actin">
    <location>
        <begin position="1"/>
        <end position="375"/>
    </location>
</feature>
<evidence type="ECO:0000250" key="1">
    <source>
        <dbReference type="UniProtKB" id="P60010"/>
    </source>
</evidence>
<evidence type="ECO:0000305" key="2"/>
<keyword id="KW-0067">ATP-binding</keyword>
<keyword id="KW-0963">Cytoplasm</keyword>
<keyword id="KW-0206">Cytoskeleton</keyword>
<keyword id="KW-0378">Hydrolase</keyword>
<keyword id="KW-0547">Nucleotide-binding</keyword>
<keyword id="KW-1185">Reference proteome</keyword>
<proteinExistence type="inferred from homology"/>
<organism>
    <name type="scientific">Aspergillus oryzae (strain ATCC 42149 / RIB 40)</name>
    <name type="common">Yellow koji mold</name>
    <dbReference type="NCBI Taxonomy" id="510516"/>
    <lineage>
        <taxon>Eukaryota</taxon>
        <taxon>Fungi</taxon>
        <taxon>Dikarya</taxon>
        <taxon>Ascomycota</taxon>
        <taxon>Pezizomycotina</taxon>
        <taxon>Eurotiomycetes</taxon>
        <taxon>Eurotiomycetidae</taxon>
        <taxon>Eurotiales</taxon>
        <taxon>Aspergillaceae</taxon>
        <taxon>Aspergillus</taxon>
        <taxon>Aspergillus subgen. Circumdati</taxon>
    </lineage>
</organism>
<accession>Q2U7A3</accession>
<gene>
    <name type="primary">act1</name>
    <name type="ORF">AO090124000010</name>
</gene>
<protein>
    <recommendedName>
        <fullName>Actin</fullName>
        <ecNumber evidence="1">3.6.4.-</ecNumber>
    </recommendedName>
</protein>